<proteinExistence type="inferred from homology"/>
<gene>
    <name evidence="1" type="primary">rplT</name>
    <name type="ordered locus">LIC_12461</name>
</gene>
<comment type="function">
    <text evidence="1">Binds directly to 23S ribosomal RNA and is necessary for the in vitro assembly process of the 50S ribosomal subunit. It is not involved in the protein synthesizing functions of that subunit.</text>
</comment>
<comment type="similarity">
    <text evidence="1">Belongs to the bacterial ribosomal protein bL20 family.</text>
</comment>
<protein>
    <recommendedName>
        <fullName evidence="1">Large ribosomal subunit protein bL20</fullName>
    </recommendedName>
    <alternativeName>
        <fullName evidence="2">50S ribosomal protein L20</fullName>
    </alternativeName>
</protein>
<keyword id="KW-0687">Ribonucleoprotein</keyword>
<keyword id="KW-0689">Ribosomal protein</keyword>
<keyword id="KW-0694">RNA-binding</keyword>
<keyword id="KW-0699">rRNA-binding</keyword>
<reference key="1">
    <citation type="journal article" date="2004" name="J. Bacteriol.">
        <title>Comparative genomics of two Leptospira interrogans serovars reveals novel insights into physiology and pathogenesis.</title>
        <authorList>
            <person name="Nascimento A.L.T.O."/>
            <person name="Ko A.I."/>
            <person name="Martins E.A.L."/>
            <person name="Monteiro-Vitorello C.B."/>
            <person name="Ho P.L."/>
            <person name="Haake D.A."/>
            <person name="Verjovski-Almeida S."/>
            <person name="Hartskeerl R.A."/>
            <person name="Marques M.V."/>
            <person name="Oliveira M.C."/>
            <person name="Menck C.F.M."/>
            <person name="Leite L.C.C."/>
            <person name="Carrer H."/>
            <person name="Coutinho L.L."/>
            <person name="Degrave W.M."/>
            <person name="Dellagostin O.A."/>
            <person name="El-Dorry H."/>
            <person name="Ferro E.S."/>
            <person name="Ferro M.I.T."/>
            <person name="Furlan L.R."/>
            <person name="Gamberini M."/>
            <person name="Giglioti E.A."/>
            <person name="Goes-Neto A."/>
            <person name="Goldman G.H."/>
            <person name="Goldman M.H.S."/>
            <person name="Harakava R."/>
            <person name="Jeronimo S.M.B."/>
            <person name="Junqueira-de-Azevedo I.L.M."/>
            <person name="Kimura E.T."/>
            <person name="Kuramae E.E."/>
            <person name="Lemos E.G.M."/>
            <person name="Lemos M.V.F."/>
            <person name="Marino C.L."/>
            <person name="Nunes L.R."/>
            <person name="de Oliveira R.C."/>
            <person name="Pereira G.G."/>
            <person name="Reis M.S."/>
            <person name="Schriefer A."/>
            <person name="Siqueira W.J."/>
            <person name="Sommer P."/>
            <person name="Tsai S.M."/>
            <person name="Simpson A.J.G."/>
            <person name="Ferro J.A."/>
            <person name="Camargo L.E.A."/>
            <person name="Kitajima J.P."/>
            <person name="Setubal J.C."/>
            <person name="Van Sluys M.A."/>
        </authorList>
    </citation>
    <scope>NUCLEOTIDE SEQUENCE [LARGE SCALE GENOMIC DNA]</scope>
    <source>
        <strain>Fiocruz L1-130</strain>
    </source>
</reference>
<accession>Q72PL0</accession>
<organism>
    <name type="scientific">Leptospira interrogans serogroup Icterohaemorrhagiae serovar copenhageni (strain Fiocruz L1-130)</name>
    <dbReference type="NCBI Taxonomy" id="267671"/>
    <lineage>
        <taxon>Bacteria</taxon>
        <taxon>Pseudomonadati</taxon>
        <taxon>Spirochaetota</taxon>
        <taxon>Spirochaetia</taxon>
        <taxon>Leptospirales</taxon>
        <taxon>Leptospiraceae</taxon>
        <taxon>Leptospira</taxon>
    </lineage>
</organism>
<evidence type="ECO:0000255" key="1">
    <source>
        <dbReference type="HAMAP-Rule" id="MF_00382"/>
    </source>
</evidence>
<evidence type="ECO:0000305" key="2"/>
<feature type="chain" id="PRO_0000177172" description="Large ribosomal subunit protein bL20">
    <location>
        <begin position="1"/>
        <end position="117"/>
    </location>
</feature>
<sequence>MPRAVNGTIHKNRRRRILKDAKGFRGARSKLYRTAKSAVMKAGQWAYRDRRAKKRDFRKLWIIRINAAARENGLSYSVFMNSLKKLGIHMDRKSLAELAFNDREVFNSLVEKIKVAG</sequence>
<name>RL20_LEPIC</name>
<dbReference type="EMBL" id="AE016823">
    <property type="protein sequence ID" value="AAS71026.1"/>
    <property type="molecule type" value="Genomic_DNA"/>
</dbReference>
<dbReference type="RefSeq" id="WP_001136837.1">
    <property type="nucleotide sequence ID" value="NC_005823.1"/>
</dbReference>
<dbReference type="SMR" id="Q72PL0"/>
<dbReference type="GeneID" id="61142338"/>
<dbReference type="KEGG" id="lic:LIC_12461"/>
<dbReference type="HOGENOM" id="CLU_123265_0_1_12"/>
<dbReference type="Proteomes" id="UP000007037">
    <property type="component" value="Chromosome I"/>
</dbReference>
<dbReference type="GO" id="GO:1990904">
    <property type="term" value="C:ribonucleoprotein complex"/>
    <property type="evidence" value="ECO:0007669"/>
    <property type="project" value="UniProtKB-KW"/>
</dbReference>
<dbReference type="GO" id="GO:0005840">
    <property type="term" value="C:ribosome"/>
    <property type="evidence" value="ECO:0007669"/>
    <property type="project" value="UniProtKB-KW"/>
</dbReference>
<dbReference type="GO" id="GO:0019843">
    <property type="term" value="F:rRNA binding"/>
    <property type="evidence" value="ECO:0007669"/>
    <property type="project" value="UniProtKB-UniRule"/>
</dbReference>
<dbReference type="GO" id="GO:0003735">
    <property type="term" value="F:structural constituent of ribosome"/>
    <property type="evidence" value="ECO:0007669"/>
    <property type="project" value="InterPro"/>
</dbReference>
<dbReference type="GO" id="GO:0000027">
    <property type="term" value="P:ribosomal large subunit assembly"/>
    <property type="evidence" value="ECO:0007669"/>
    <property type="project" value="UniProtKB-UniRule"/>
</dbReference>
<dbReference type="GO" id="GO:0006412">
    <property type="term" value="P:translation"/>
    <property type="evidence" value="ECO:0007669"/>
    <property type="project" value="InterPro"/>
</dbReference>
<dbReference type="CDD" id="cd07026">
    <property type="entry name" value="Ribosomal_L20"/>
    <property type="match status" value="1"/>
</dbReference>
<dbReference type="FunFam" id="1.10.1900.20:FF:000001">
    <property type="entry name" value="50S ribosomal protein L20"/>
    <property type="match status" value="1"/>
</dbReference>
<dbReference type="Gene3D" id="6.10.160.10">
    <property type="match status" value="1"/>
</dbReference>
<dbReference type="Gene3D" id="1.10.1900.20">
    <property type="entry name" value="Ribosomal protein L20"/>
    <property type="match status" value="1"/>
</dbReference>
<dbReference type="HAMAP" id="MF_00382">
    <property type="entry name" value="Ribosomal_bL20"/>
    <property type="match status" value="1"/>
</dbReference>
<dbReference type="InterPro" id="IPR005813">
    <property type="entry name" value="Ribosomal_bL20"/>
</dbReference>
<dbReference type="InterPro" id="IPR049946">
    <property type="entry name" value="RIBOSOMAL_L20_CS"/>
</dbReference>
<dbReference type="InterPro" id="IPR035566">
    <property type="entry name" value="Ribosomal_protein_bL20_C"/>
</dbReference>
<dbReference type="NCBIfam" id="TIGR01032">
    <property type="entry name" value="rplT_bact"/>
    <property type="match status" value="1"/>
</dbReference>
<dbReference type="PANTHER" id="PTHR10986">
    <property type="entry name" value="39S RIBOSOMAL PROTEIN L20"/>
    <property type="match status" value="1"/>
</dbReference>
<dbReference type="Pfam" id="PF00453">
    <property type="entry name" value="Ribosomal_L20"/>
    <property type="match status" value="1"/>
</dbReference>
<dbReference type="PRINTS" id="PR00062">
    <property type="entry name" value="RIBOSOMALL20"/>
</dbReference>
<dbReference type="SUPFAM" id="SSF74731">
    <property type="entry name" value="Ribosomal protein L20"/>
    <property type="match status" value="1"/>
</dbReference>
<dbReference type="PROSITE" id="PS00937">
    <property type="entry name" value="RIBOSOMAL_L20"/>
    <property type="match status" value="1"/>
</dbReference>